<keyword id="KW-0963">Cytoplasm</keyword>
<keyword id="KW-0227">DNA damage</keyword>
<keyword id="KW-0233">DNA recombination</keyword>
<keyword id="KW-0234">DNA repair</keyword>
<keyword id="KW-0238">DNA-binding</keyword>
<organism>
    <name type="scientific">Campylobacter fetus subsp. fetus (strain 82-40)</name>
    <dbReference type="NCBI Taxonomy" id="360106"/>
    <lineage>
        <taxon>Bacteria</taxon>
        <taxon>Pseudomonadati</taxon>
        <taxon>Campylobacterota</taxon>
        <taxon>Epsilonproteobacteria</taxon>
        <taxon>Campylobacterales</taxon>
        <taxon>Campylobacteraceae</taxon>
        <taxon>Campylobacter</taxon>
    </lineage>
</organism>
<accession>A0RP49</accession>
<proteinExistence type="inferred from homology"/>
<sequence length="184" mass="20041">MIKAIEGIITKKEPTNVWIKTLSGVSYGISISLFTSASLQKGEKVELFITQVIREDANLLYGFIKESEQRIFEMLLKVNGIGASTAMAVCSSLGPDEFSIAVMNGDDAVLRRVPGIGPKTARTLIAQLSDAKFGEINSMPSYQNEAFMALESLGFKRDRISKVLNECSSNDTASLIKEALKKLA</sequence>
<name>RUVA_CAMFF</name>
<dbReference type="EMBL" id="CP000487">
    <property type="protein sequence ID" value="ABK83135.1"/>
    <property type="molecule type" value="Genomic_DNA"/>
</dbReference>
<dbReference type="RefSeq" id="WP_002849261.1">
    <property type="nucleotide sequence ID" value="NC_008599.1"/>
</dbReference>
<dbReference type="SMR" id="A0RP49"/>
<dbReference type="GeneID" id="61064644"/>
<dbReference type="KEGG" id="cff:CFF8240_0807"/>
<dbReference type="eggNOG" id="COG0632">
    <property type="taxonomic scope" value="Bacteria"/>
</dbReference>
<dbReference type="HOGENOM" id="CLU_087936_3_1_7"/>
<dbReference type="Proteomes" id="UP000000760">
    <property type="component" value="Chromosome"/>
</dbReference>
<dbReference type="GO" id="GO:0005737">
    <property type="term" value="C:cytoplasm"/>
    <property type="evidence" value="ECO:0007669"/>
    <property type="project" value="UniProtKB-SubCell"/>
</dbReference>
<dbReference type="GO" id="GO:0009379">
    <property type="term" value="C:Holliday junction helicase complex"/>
    <property type="evidence" value="ECO:0007669"/>
    <property type="project" value="InterPro"/>
</dbReference>
<dbReference type="GO" id="GO:0048476">
    <property type="term" value="C:Holliday junction resolvase complex"/>
    <property type="evidence" value="ECO:0007669"/>
    <property type="project" value="UniProtKB-UniRule"/>
</dbReference>
<dbReference type="GO" id="GO:0005524">
    <property type="term" value="F:ATP binding"/>
    <property type="evidence" value="ECO:0007669"/>
    <property type="project" value="InterPro"/>
</dbReference>
<dbReference type="GO" id="GO:0000400">
    <property type="term" value="F:four-way junction DNA binding"/>
    <property type="evidence" value="ECO:0007669"/>
    <property type="project" value="UniProtKB-UniRule"/>
</dbReference>
<dbReference type="GO" id="GO:0009378">
    <property type="term" value="F:four-way junction helicase activity"/>
    <property type="evidence" value="ECO:0007669"/>
    <property type="project" value="InterPro"/>
</dbReference>
<dbReference type="GO" id="GO:0006310">
    <property type="term" value="P:DNA recombination"/>
    <property type="evidence" value="ECO:0007669"/>
    <property type="project" value="UniProtKB-UniRule"/>
</dbReference>
<dbReference type="GO" id="GO:0006281">
    <property type="term" value="P:DNA repair"/>
    <property type="evidence" value="ECO:0007669"/>
    <property type="project" value="UniProtKB-UniRule"/>
</dbReference>
<dbReference type="CDD" id="cd14332">
    <property type="entry name" value="UBA_RuvA_C"/>
    <property type="match status" value="1"/>
</dbReference>
<dbReference type="Gene3D" id="1.10.150.20">
    <property type="entry name" value="5' to 3' exonuclease, C-terminal subdomain"/>
    <property type="match status" value="1"/>
</dbReference>
<dbReference type="Gene3D" id="1.10.8.10">
    <property type="entry name" value="DNA helicase RuvA subunit, C-terminal domain"/>
    <property type="match status" value="1"/>
</dbReference>
<dbReference type="Gene3D" id="2.40.50.140">
    <property type="entry name" value="Nucleic acid-binding proteins"/>
    <property type="match status" value="1"/>
</dbReference>
<dbReference type="HAMAP" id="MF_00031">
    <property type="entry name" value="DNA_HJ_migration_RuvA"/>
    <property type="match status" value="1"/>
</dbReference>
<dbReference type="InterPro" id="IPR013849">
    <property type="entry name" value="DNA_helicase_Holl-junc_RuvA_I"/>
</dbReference>
<dbReference type="InterPro" id="IPR003583">
    <property type="entry name" value="Hlx-hairpin-Hlx_DNA-bd_motif"/>
</dbReference>
<dbReference type="InterPro" id="IPR012340">
    <property type="entry name" value="NA-bd_OB-fold"/>
</dbReference>
<dbReference type="InterPro" id="IPR000085">
    <property type="entry name" value="RuvA"/>
</dbReference>
<dbReference type="InterPro" id="IPR010994">
    <property type="entry name" value="RuvA_2-like"/>
</dbReference>
<dbReference type="InterPro" id="IPR011114">
    <property type="entry name" value="RuvA_C"/>
</dbReference>
<dbReference type="InterPro" id="IPR036267">
    <property type="entry name" value="RuvA_C_sf"/>
</dbReference>
<dbReference type="NCBIfam" id="TIGR00084">
    <property type="entry name" value="ruvA"/>
    <property type="match status" value="1"/>
</dbReference>
<dbReference type="Pfam" id="PF14520">
    <property type="entry name" value="HHH_5"/>
    <property type="match status" value="1"/>
</dbReference>
<dbReference type="Pfam" id="PF07499">
    <property type="entry name" value="RuvA_C"/>
    <property type="match status" value="1"/>
</dbReference>
<dbReference type="Pfam" id="PF01330">
    <property type="entry name" value="RuvA_N"/>
    <property type="match status" value="1"/>
</dbReference>
<dbReference type="SMART" id="SM00278">
    <property type="entry name" value="HhH1"/>
    <property type="match status" value="2"/>
</dbReference>
<dbReference type="SUPFAM" id="SSF46929">
    <property type="entry name" value="DNA helicase RuvA subunit, C-terminal domain"/>
    <property type="match status" value="1"/>
</dbReference>
<dbReference type="SUPFAM" id="SSF50249">
    <property type="entry name" value="Nucleic acid-binding proteins"/>
    <property type="match status" value="1"/>
</dbReference>
<dbReference type="SUPFAM" id="SSF47781">
    <property type="entry name" value="RuvA domain 2-like"/>
    <property type="match status" value="1"/>
</dbReference>
<evidence type="ECO:0000255" key="1">
    <source>
        <dbReference type="HAMAP-Rule" id="MF_00031"/>
    </source>
</evidence>
<reference key="1">
    <citation type="submission" date="2006-11" db="EMBL/GenBank/DDBJ databases">
        <title>Sequence of Campylobacter fetus subsp. fetus 82-40.</title>
        <authorList>
            <person name="Fouts D.E."/>
            <person name="Nelson K.E."/>
        </authorList>
    </citation>
    <scope>NUCLEOTIDE SEQUENCE [LARGE SCALE GENOMIC DNA]</scope>
    <source>
        <strain>82-40</strain>
    </source>
</reference>
<protein>
    <recommendedName>
        <fullName evidence="1">Holliday junction branch migration complex subunit RuvA</fullName>
    </recommendedName>
</protein>
<feature type="chain" id="PRO_1000002422" description="Holliday junction branch migration complex subunit RuvA">
    <location>
        <begin position="1"/>
        <end position="184"/>
    </location>
</feature>
<feature type="region of interest" description="Domain I" evidence="1">
    <location>
        <begin position="1"/>
        <end position="64"/>
    </location>
</feature>
<feature type="region of interest" description="Domain II" evidence="1">
    <location>
        <begin position="65"/>
        <end position="137"/>
    </location>
</feature>
<feature type="region of interest" description="Flexible linker" evidence="1">
    <location>
        <position position="137"/>
    </location>
</feature>
<feature type="region of interest" description="Domain III" evidence="1">
    <location>
        <begin position="138"/>
        <end position="184"/>
    </location>
</feature>
<gene>
    <name evidence="1" type="primary">ruvA</name>
    <name type="ordered locus">CFF8240_0807</name>
</gene>
<comment type="function">
    <text evidence="1">The RuvA-RuvB-RuvC complex processes Holliday junction (HJ) DNA during genetic recombination and DNA repair, while the RuvA-RuvB complex plays an important role in the rescue of blocked DNA replication forks via replication fork reversal (RFR). RuvA specifically binds to HJ cruciform DNA, conferring on it an open structure. The RuvB hexamer acts as an ATP-dependent pump, pulling dsDNA into and through the RuvAB complex. HJ branch migration allows RuvC to scan DNA until it finds its consensus sequence, where it cleaves and resolves the cruciform DNA.</text>
</comment>
<comment type="subunit">
    <text evidence="1">Homotetramer. Forms an RuvA(8)-RuvB(12)-Holliday junction (HJ) complex. HJ DNA is sandwiched between 2 RuvA tetramers; dsDNA enters through RuvA and exits via RuvB. An RuvB hexamer assembles on each DNA strand where it exits the tetramer. Each RuvB hexamer is contacted by two RuvA subunits (via domain III) on 2 adjacent RuvB subunits; this complex drives branch migration. In the full resolvosome a probable DNA-RuvA(4)-RuvB(12)-RuvC(2) complex forms which resolves the HJ.</text>
</comment>
<comment type="subcellular location">
    <subcellularLocation>
        <location evidence="1">Cytoplasm</location>
    </subcellularLocation>
</comment>
<comment type="domain">
    <text evidence="1">Has three domains with a flexible linker between the domains II and III and assumes an 'L' shape. Domain III is highly mobile and contacts RuvB.</text>
</comment>
<comment type="similarity">
    <text evidence="1">Belongs to the RuvA family.</text>
</comment>